<keyword id="KW-1003">Cell membrane</keyword>
<keyword id="KW-0472">Membrane</keyword>
<keyword id="KW-1185">Reference proteome</keyword>
<keyword id="KW-0812">Transmembrane</keyword>
<keyword id="KW-1133">Transmembrane helix</keyword>
<gene>
    <name type="ordered locus">Rv1490</name>
    <name type="ORF">MTCY277.12</name>
</gene>
<accession>P9WLX1</accession>
<accession>L0T6T5</accession>
<accession>P64857</accession>
<accession>P71771</accession>
<comment type="subcellular location">
    <subcellularLocation>
        <location evidence="2">Cell membrane</location>
        <topology evidence="2">Multi-pass membrane protein</topology>
    </subcellularLocation>
</comment>
<feature type="chain" id="PRO_0000103856" description="Uncharacterized protein Rv1490">
    <location>
        <begin position="1"/>
        <end position="435"/>
    </location>
</feature>
<feature type="transmembrane region" description="Helical" evidence="1">
    <location>
        <begin position="40"/>
        <end position="60"/>
    </location>
</feature>
<feature type="transmembrane region" description="Helical" evidence="1">
    <location>
        <begin position="103"/>
        <end position="123"/>
    </location>
</feature>
<feature type="transmembrane region" description="Helical" evidence="1">
    <location>
        <begin position="133"/>
        <end position="153"/>
    </location>
</feature>
<feature type="transmembrane region" description="Helical" evidence="1">
    <location>
        <begin position="195"/>
        <end position="215"/>
    </location>
</feature>
<feature type="transmembrane region" description="Helical" evidence="1">
    <location>
        <begin position="226"/>
        <end position="246"/>
    </location>
</feature>
<feature type="transmembrane region" description="Helical" evidence="1">
    <location>
        <begin position="313"/>
        <end position="333"/>
    </location>
</feature>
<feature type="transmembrane region" description="Helical" evidence="1">
    <location>
        <begin position="358"/>
        <end position="378"/>
    </location>
</feature>
<feature type="transmembrane region" description="Helical" evidence="1">
    <location>
        <begin position="381"/>
        <end position="401"/>
    </location>
</feature>
<feature type="transmembrane region" description="Helical" evidence="1">
    <location>
        <begin position="414"/>
        <end position="434"/>
    </location>
</feature>
<name>Y1490_MYCTU</name>
<dbReference type="EMBL" id="AL123456">
    <property type="protein sequence ID" value="CCP44251.1"/>
    <property type="molecule type" value="Genomic_DNA"/>
</dbReference>
<dbReference type="PIR" id="E70711">
    <property type="entry name" value="E70711"/>
</dbReference>
<dbReference type="RefSeq" id="NP_216006.1">
    <property type="nucleotide sequence ID" value="NC_000962.3"/>
</dbReference>
<dbReference type="RefSeq" id="WP_003898896.1">
    <property type="nucleotide sequence ID" value="NZ_NVQJ01000004.1"/>
</dbReference>
<dbReference type="STRING" id="83332.Rv1490"/>
<dbReference type="PaxDb" id="83332-Rv1490"/>
<dbReference type="DNASU" id="886511"/>
<dbReference type="GeneID" id="886511"/>
<dbReference type="KEGG" id="mtu:Rv1490"/>
<dbReference type="KEGG" id="mtv:RVBD_1490"/>
<dbReference type="TubercuList" id="Rv1490"/>
<dbReference type="eggNOG" id="ENOG5030QQK">
    <property type="taxonomic scope" value="Bacteria"/>
</dbReference>
<dbReference type="InParanoid" id="P9WLX1"/>
<dbReference type="OrthoDB" id="4750568at2"/>
<dbReference type="Proteomes" id="UP000001584">
    <property type="component" value="Chromosome"/>
</dbReference>
<dbReference type="GO" id="GO:0005886">
    <property type="term" value="C:plasma membrane"/>
    <property type="evidence" value="ECO:0007669"/>
    <property type="project" value="UniProtKB-SubCell"/>
</dbReference>
<sequence length="435" mass="48150">MSQCFAVKGIGGADQATLGSAEILVKYAQLADKRARVYVLVSTWLVVWGIWHVYFVEAVFPNAILWLHYYAASYEFGFVRRGLGGELIRMLTGDHFFAGAYTVLWTSITVWLIALAVVVWLILSTGNRSERRIMLALLVPVLPFAFSYAIYNPHPELFGMTALVAFSIFLTRAHTSRTRVILSTLYGLTMAVLALIHEAIPLEFALGAVLAIIVLSKNATGATRRICTALAIGPGTVSVLLLAVVGRRDIADQLCAHIPHGMVENPWAVATTPQRVLDYIFGRVESHADYHDWVCEHVTPWFNLDWITSAKLVAVVGFRALFGAFLLGLLFFVATTSMIRYVSAVPVRTFFAELRGNLALPVLASALLVPLFITAVDWTRWWVMITLDVAIVYILYAIDRPEIEQPPSRRNVQVFVCVVLVLAVIPTGSANNIGR</sequence>
<reference key="1">
    <citation type="journal article" date="1998" name="Nature">
        <title>Deciphering the biology of Mycobacterium tuberculosis from the complete genome sequence.</title>
        <authorList>
            <person name="Cole S.T."/>
            <person name="Brosch R."/>
            <person name="Parkhill J."/>
            <person name="Garnier T."/>
            <person name="Churcher C.M."/>
            <person name="Harris D.E."/>
            <person name="Gordon S.V."/>
            <person name="Eiglmeier K."/>
            <person name="Gas S."/>
            <person name="Barry C.E. III"/>
            <person name="Tekaia F."/>
            <person name="Badcock K."/>
            <person name="Basham D."/>
            <person name="Brown D."/>
            <person name="Chillingworth T."/>
            <person name="Connor R."/>
            <person name="Davies R.M."/>
            <person name="Devlin K."/>
            <person name="Feltwell T."/>
            <person name="Gentles S."/>
            <person name="Hamlin N."/>
            <person name="Holroyd S."/>
            <person name="Hornsby T."/>
            <person name="Jagels K."/>
            <person name="Krogh A."/>
            <person name="McLean J."/>
            <person name="Moule S."/>
            <person name="Murphy L.D."/>
            <person name="Oliver S."/>
            <person name="Osborne J."/>
            <person name="Quail M.A."/>
            <person name="Rajandream M.A."/>
            <person name="Rogers J."/>
            <person name="Rutter S."/>
            <person name="Seeger K."/>
            <person name="Skelton S."/>
            <person name="Squares S."/>
            <person name="Squares R."/>
            <person name="Sulston J.E."/>
            <person name="Taylor K."/>
            <person name="Whitehead S."/>
            <person name="Barrell B.G."/>
        </authorList>
    </citation>
    <scope>NUCLEOTIDE SEQUENCE [LARGE SCALE GENOMIC DNA]</scope>
    <source>
        <strain>ATCC 25618 / H37Rv</strain>
    </source>
</reference>
<proteinExistence type="predicted"/>
<organism>
    <name type="scientific">Mycobacterium tuberculosis (strain ATCC 25618 / H37Rv)</name>
    <dbReference type="NCBI Taxonomy" id="83332"/>
    <lineage>
        <taxon>Bacteria</taxon>
        <taxon>Bacillati</taxon>
        <taxon>Actinomycetota</taxon>
        <taxon>Actinomycetes</taxon>
        <taxon>Mycobacteriales</taxon>
        <taxon>Mycobacteriaceae</taxon>
        <taxon>Mycobacterium</taxon>
        <taxon>Mycobacterium tuberculosis complex</taxon>
    </lineage>
</organism>
<protein>
    <recommendedName>
        <fullName>Uncharacterized protein Rv1490</fullName>
    </recommendedName>
</protein>
<evidence type="ECO:0000255" key="1"/>
<evidence type="ECO:0000305" key="2"/>